<name>EVX1_MOUSE</name>
<feature type="chain" id="PRO_0000048871" description="Homeobox even-skipped homolog protein 1">
    <location>
        <begin position="1"/>
        <end position="416"/>
    </location>
</feature>
<feature type="DNA-binding region" description="Homeobox" evidence="1">
    <location>
        <begin position="183"/>
        <end position="242"/>
    </location>
</feature>
<feature type="region of interest" description="Disordered" evidence="2">
    <location>
        <begin position="30"/>
        <end position="120"/>
    </location>
</feature>
<feature type="region of interest" description="Disordered" evidence="2">
    <location>
        <begin position="138"/>
        <end position="178"/>
    </location>
</feature>
<feature type="compositionally biased region" description="Low complexity" evidence="2">
    <location>
        <begin position="72"/>
        <end position="82"/>
    </location>
</feature>
<feature type="compositionally biased region" description="Polar residues" evidence="2">
    <location>
        <begin position="102"/>
        <end position="114"/>
    </location>
</feature>
<reference key="1">
    <citation type="journal article" date="1990" name="EMBO J.">
        <title>A murine even-skipped homologue, Evx 1, is expressed during early embryogenesis and neurogenesis in a biphasic manner.</title>
        <authorList>
            <person name="Bastian H."/>
            <person name="Gruss P."/>
        </authorList>
    </citation>
    <scope>NUCLEOTIDE SEQUENCE [MRNA]</scope>
    <source>
        <strain>BALB/cJ</strain>
        <tissue>Liver</tissue>
    </source>
</reference>
<reference key="2">
    <citation type="journal article" date="1992" name="Dev. Biol.">
        <title>Analysis of mouse Evx genes: Evx-1 displays graded expression in the primitive streak.</title>
        <authorList>
            <person name="Dush M.K."/>
            <person name="Martin G.R."/>
        </authorList>
    </citation>
    <scope>NUCLEOTIDE SEQUENCE [MRNA]</scope>
    <source>
        <strain>BALB/cJ</strain>
    </source>
</reference>
<sequence length="416" mass="43198">MESRKDMVMFLDGGQLGTLVGKRVSNLSEAVSSPLPEPPEKMVPHGCLSPRAGPPTSRERGGGGQEEEPVDGLAGSAAGLGAEPRSAGAAMLGPGPPVPSADSLSGQGQPSSSDTESDFYEEIEVSCTPDCATGNAEYQHSKAPGSDALGSSPTSGSEAPKSNGGSGGSGSQGTLACSASDQMRRYRTAFTREQIARLEKEFYRENYVSRPRRCELAAALNLPETTIKVWFQNRRMKDKRQRLAMTWPHPADPAFYTYMMSHAAAAGGLPYPFPSHLPLPYYSPVGLGAASAASAAASPFSGPLRPLDTFRVLSQPYPRPELLCAFRHPPLYPGPAHGLGASAAAAAAAGPCSCLACHSGPANGLAPRAAAAAAASDFTCASTSRSDSFLTFAPSVLSKASSVAALDQREEVPLTR</sequence>
<evidence type="ECO:0000255" key="1">
    <source>
        <dbReference type="PROSITE-ProRule" id="PRU00108"/>
    </source>
</evidence>
<evidence type="ECO:0000256" key="2">
    <source>
        <dbReference type="SAM" id="MobiDB-lite"/>
    </source>
</evidence>
<evidence type="ECO:0000305" key="3"/>
<comment type="function">
    <text>May play a role in the specification of neuronal cell types. May play a role in the dorsoventral specification of mesodermal cell fate.</text>
</comment>
<comment type="subcellular location">
    <subcellularLocation>
        <location>Nucleus</location>
    </subcellularLocation>
</comment>
<comment type="developmental stage">
    <text>Shows a graded distribution in the primitive streak and in cells lateral to it. It is not detected in cells along the A-P axis of the embryo anterior to the primitive streak, except at 7.5 dpc when there is transient expression in the head process. The highest levels of expression are found within the proximal (posterior) portion of the primitive streak and cells near it, with expression levels decreasing more distally (anteriorly).</text>
</comment>
<comment type="similarity">
    <text evidence="3">Belongs to the even-skipped homeobox family.</text>
</comment>
<gene>
    <name type="primary">Evx1</name>
</gene>
<dbReference type="EMBL" id="X54239">
    <property type="protein sequence ID" value="CAA38145.1"/>
    <property type="molecule type" value="mRNA"/>
</dbReference>
<dbReference type="CCDS" id="CCDS20149.1"/>
<dbReference type="RefSeq" id="NP_031992.1">
    <property type="nucleotide sequence ID" value="NM_007966.4"/>
</dbReference>
<dbReference type="FunCoup" id="P23683">
    <property type="interactions" value="472"/>
</dbReference>
<dbReference type="STRING" id="10090.ENSMUSP00000031787"/>
<dbReference type="GlyGen" id="P23683">
    <property type="glycosylation" value="1 site"/>
</dbReference>
<dbReference type="PaxDb" id="10090-ENSMUSP00000031787"/>
<dbReference type="ProteomicsDB" id="267667"/>
<dbReference type="Antibodypedia" id="12413">
    <property type="antibodies" value="174 antibodies from 21 providers"/>
</dbReference>
<dbReference type="DNASU" id="14028"/>
<dbReference type="Ensembl" id="ENSMUST00000031787.8">
    <property type="protein sequence ID" value="ENSMUSP00000031787.8"/>
    <property type="gene ID" value="ENSMUSG00000005503.9"/>
</dbReference>
<dbReference type="GeneID" id="14028"/>
<dbReference type="KEGG" id="mmu:14028"/>
<dbReference type="UCSC" id="uc009byv.1">
    <property type="organism name" value="mouse"/>
</dbReference>
<dbReference type="AGR" id="MGI:95461"/>
<dbReference type="CTD" id="2128"/>
<dbReference type="MGI" id="MGI:95461">
    <property type="gene designation" value="Evx1"/>
</dbReference>
<dbReference type="VEuPathDB" id="HostDB:ENSMUSG00000005503"/>
<dbReference type="eggNOG" id="KOG0844">
    <property type="taxonomic scope" value="Eukaryota"/>
</dbReference>
<dbReference type="GeneTree" id="ENSGT00940000159854"/>
<dbReference type="HOGENOM" id="CLU_045075_1_0_1"/>
<dbReference type="InParanoid" id="P23683"/>
<dbReference type="OMA" id="NCISPRP"/>
<dbReference type="OrthoDB" id="6159439at2759"/>
<dbReference type="PhylomeDB" id="P23683"/>
<dbReference type="TreeFam" id="TF315938"/>
<dbReference type="BioGRID-ORCS" id="14028">
    <property type="hits" value="3 hits in 77 CRISPR screens"/>
</dbReference>
<dbReference type="PRO" id="PR:P23683"/>
<dbReference type="Proteomes" id="UP000000589">
    <property type="component" value="Chromosome 6"/>
</dbReference>
<dbReference type="RNAct" id="P23683">
    <property type="molecule type" value="protein"/>
</dbReference>
<dbReference type="Bgee" id="ENSMUSG00000005503">
    <property type="expression patterns" value="Expressed in neural tube marginal layer and 89 other cell types or tissues"/>
</dbReference>
<dbReference type="ExpressionAtlas" id="P23683">
    <property type="expression patterns" value="baseline and differential"/>
</dbReference>
<dbReference type="GO" id="GO:0030424">
    <property type="term" value="C:axon"/>
    <property type="evidence" value="ECO:0000314"/>
    <property type="project" value="MGI"/>
</dbReference>
<dbReference type="GO" id="GO:0043025">
    <property type="term" value="C:neuronal cell body"/>
    <property type="evidence" value="ECO:0000314"/>
    <property type="project" value="MGI"/>
</dbReference>
<dbReference type="GO" id="GO:0005654">
    <property type="term" value="C:nucleoplasm"/>
    <property type="evidence" value="ECO:0007669"/>
    <property type="project" value="Ensembl"/>
</dbReference>
<dbReference type="GO" id="GO:0000981">
    <property type="term" value="F:DNA-binding transcription factor activity, RNA polymerase II-specific"/>
    <property type="evidence" value="ECO:0007669"/>
    <property type="project" value="InterPro"/>
</dbReference>
<dbReference type="GO" id="GO:1990837">
    <property type="term" value="F:sequence-specific double-stranded DNA binding"/>
    <property type="evidence" value="ECO:0007669"/>
    <property type="project" value="Ensembl"/>
</dbReference>
<dbReference type="GO" id="GO:0009792">
    <property type="term" value="P:embryo development ending in birth or egg hatching"/>
    <property type="evidence" value="ECO:0000315"/>
    <property type="project" value="MGI"/>
</dbReference>
<dbReference type="GO" id="GO:1904936">
    <property type="term" value="P:interneuron migration"/>
    <property type="evidence" value="ECO:0000315"/>
    <property type="project" value="MGI"/>
</dbReference>
<dbReference type="GO" id="GO:0045944">
    <property type="term" value="P:positive regulation of transcription by RNA polymerase II"/>
    <property type="evidence" value="ECO:0000314"/>
    <property type="project" value="MGI"/>
</dbReference>
<dbReference type="GO" id="GO:0006357">
    <property type="term" value="P:regulation of transcription by RNA polymerase II"/>
    <property type="evidence" value="ECO:0000315"/>
    <property type="project" value="MGI"/>
</dbReference>
<dbReference type="GO" id="GO:0097377">
    <property type="term" value="P:spinal cord interneuron axon guidance"/>
    <property type="evidence" value="ECO:0000315"/>
    <property type="project" value="MGI"/>
</dbReference>
<dbReference type="CDD" id="cd00086">
    <property type="entry name" value="homeodomain"/>
    <property type="match status" value="1"/>
</dbReference>
<dbReference type="FunFam" id="1.10.10.60:FF:000256">
    <property type="entry name" value="Even-skipped homeobox 1"/>
    <property type="match status" value="1"/>
</dbReference>
<dbReference type="Gene3D" id="1.10.10.60">
    <property type="entry name" value="Homeodomain-like"/>
    <property type="match status" value="1"/>
</dbReference>
<dbReference type="InterPro" id="IPR052002">
    <property type="entry name" value="Even-skipped_HD"/>
</dbReference>
<dbReference type="InterPro" id="IPR001356">
    <property type="entry name" value="HD"/>
</dbReference>
<dbReference type="InterPro" id="IPR020479">
    <property type="entry name" value="HD_metazoa"/>
</dbReference>
<dbReference type="InterPro" id="IPR017970">
    <property type="entry name" value="Homeobox_CS"/>
</dbReference>
<dbReference type="InterPro" id="IPR009057">
    <property type="entry name" value="Homeodomain-like_sf"/>
</dbReference>
<dbReference type="PANTHER" id="PTHR46294:SF2">
    <property type="entry name" value="HOMEOBOX EVEN-SKIPPED HOMOLOG PROTEIN 1"/>
    <property type="match status" value="1"/>
</dbReference>
<dbReference type="PANTHER" id="PTHR46294">
    <property type="entry name" value="SEGMENTATION PROTEIN EVEN-SKIPPED"/>
    <property type="match status" value="1"/>
</dbReference>
<dbReference type="Pfam" id="PF00046">
    <property type="entry name" value="Homeodomain"/>
    <property type="match status" value="1"/>
</dbReference>
<dbReference type="PRINTS" id="PR00024">
    <property type="entry name" value="HOMEOBOX"/>
</dbReference>
<dbReference type="SMART" id="SM00389">
    <property type="entry name" value="HOX"/>
    <property type="match status" value="1"/>
</dbReference>
<dbReference type="SUPFAM" id="SSF46689">
    <property type="entry name" value="Homeodomain-like"/>
    <property type="match status" value="1"/>
</dbReference>
<dbReference type="PROSITE" id="PS00027">
    <property type="entry name" value="HOMEOBOX_1"/>
    <property type="match status" value="1"/>
</dbReference>
<dbReference type="PROSITE" id="PS50071">
    <property type="entry name" value="HOMEOBOX_2"/>
    <property type="match status" value="1"/>
</dbReference>
<keyword id="KW-0217">Developmental protein</keyword>
<keyword id="KW-0238">DNA-binding</keyword>
<keyword id="KW-0371">Homeobox</keyword>
<keyword id="KW-0539">Nucleus</keyword>
<keyword id="KW-1185">Reference proteome</keyword>
<organism>
    <name type="scientific">Mus musculus</name>
    <name type="common">Mouse</name>
    <dbReference type="NCBI Taxonomy" id="10090"/>
    <lineage>
        <taxon>Eukaryota</taxon>
        <taxon>Metazoa</taxon>
        <taxon>Chordata</taxon>
        <taxon>Craniata</taxon>
        <taxon>Vertebrata</taxon>
        <taxon>Euteleostomi</taxon>
        <taxon>Mammalia</taxon>
        <taxon>Eutheria</taxon>
        <taxon>Euarchontoglires</taxon>
        <taxon>Glires</taxon>
        <taxon>Rodentia</taxon>
        <taxon>Myomorpha</taxon>
        <taxon>Muroidea</taxon>
        <taxon>Muridae</taxon>
        <taxon>Murinae</taxon>
        <taxon>Mus</taxon>
        <taxon>Mus</taxon>
    </lineage>
</organism>
<proteinExistence type="evidence at transcript level"/>
<accession>P23683</accession>
<protein>
    <recommendedName>
        <fullName>Homeobox even-skipped homolog protein 1</fullName>
    </recommendedName>
    <alternativeName>
        <fullName>EVX-1</fullName>
    </alternativeName>
</protein>